<accession>Q8TVE8</accession>
<sequence length="68" mass="8063">MPDVRRCDFCGRIIEPGTGKMFVKNDGTILWFCSSKCERNMLKLGRDPKKVRWTEKHREFMAEQRGEL</sequence>
<reference key="1">
    <citation type="journal article" date="2002" name="Proc. Natl. Acad. Sci. U.S.A.">
        <title>The complete genome of hyperthermophile Methanopyrus kandleri AV19 and monophyly of archaeal methanogens.</title>
        <authorList>
            <person name="Slesarev A.I."/>
            <person name="Mezhevaya K.V."/>
            <person name="Makarova K.S."/>
            <person name="Polushin N.N."/>
            <person name="Shcherbinina O.V."/>
            <person name="Shakhova V.V."/>
            <person name="Belova G.I."/>
            <person name="Aravind L."/>
            <person name="Natale D.A."/>
            <person name="Rogozin I.B."/>
            <person name="Tatusov R.L."/>
            <person name="Wolf Y.I."/>
            <person name="Stetter K.O."/>
            <person name="Malykh A.G."/>
            <person name="Koonin E.V."/>
            <person name="Kozyavkin S.A."/>
        </authorList>
    </citation>
    <scope>NUCLEOTIDE SEQUENCE [LARGE SCALE GENOMIC DNA]</scope>
    <source>
        <strain>AV19 / DSM 6324 / JCM 9639 / NBRC 100938</strain>
    </source>
</reference>
<keyword id="KW-0479">Metal-binding</keyword>
<keyword id="KW-1185">Reference proteome</keyword>
<keyword id="KW-0687">Ribonucleoprotein</keyword>
<keyword id="KW-0689">Ribosomal protein</keyword>
<keyword id="KW-0694">RNA-binding</keyword>
<keyword id="KW-0699">rRNA-binding</keyword>
<keyword id="KW-0862">Zinc</keyword>
<keyword id="KW-0863">Zinc-finger</keyword>
<feature type="chain" id="PRO_0000136917" description="Large ribosomal subunit protein eL24">
    <location>
        <begin position="1"/>
        <end position="68"/>
    </location>
</feature>
<feature type="zinc finger region" description="C4-type" evidence="1">
    <location>
        <begin position="7"/>
        <end position="37"/>
    </location>
</feature>
<feature type="binding site" evidence="1">
    <location>
        <position position="7"/>
    </location>
    <ligand>
        <name>Zn(2+)</name>
        <dbReference type="ChEBI" id="CHEBI:29105"/>
    </ligand>
</feature>
<feature type="binding site" evidence="1">
    <location>
        <position position="10"/>
    </location>
    <ligand>
        <name>Zn(2+)</name>
        <dbReference type="ChEBI" id="CHEBI:29105"/>
    </ligand>
</feature>
<feature type="binding site" evidence="1">
    <location>
        <position position="33"/>
    </location>
    <ligand>
        <name>Zn(2+)</name>
        <dbReference type="ChEBI" id="CHEBI:29105"/>
    </ligand>
</feature>
<feature type="binding site" evidence="1">
    <location>
        <position position="37"/>
    </location>
    <ligand>
        <name>Zn(2+)</name>
        <dbReference type="ChEBI" id="CHEBI:29105"/>
    </ligand>
</feature>
<protein>
    <recommendedName>
        <fullName evidence="1">Large ribosomal subunit protein eL24</fullName>
    </recommendedName>
    <alternativeName>
        <fullName evidence="2">50S ribosomal protein L24e</fullName>
    </alternativeName>
</protein>
<evidence type="ECO:0000255" key="1">
    <source>
        <dbReference type="HAMAP-Rule" id="MF_00773"/>
    </source>
</evidence>
<evidence type="ECO:0000305" key="2"/>
<gene>
    <name evidence="1" type="primary">rpl24e</name>
    <name type="ordered locus">MK1444</name>
</gene>
<dbReference type="EMBL" id="AE009439">
    <property type="protein sequence ID" value="AAM02657.1"/>
    <property type="molecule type" value="Genomic_DNA"/>
</dbReference>
<dbReference type="RefSeq" id="WP_011019812.1">
    <property type="nucleotide sequence ID" value="NC_003551.1"/>
</dbReference>
<dbReference type="SMR" id="Q8TVE8"/>
<dbReference type="FunCoup" id="Q8TVE8">
    <property type="interactions" value="61"/>
</dbReference>
<dbReference type="STRING" id="190192.MK1444"/>
<dbReference type="PaxDb" id="190192-MK1444"/>
<dbReference type="EnsemblBacteria" id="AAM02657">
    <property type="protein sequence ID" value="AAM02657"/>
    <property type="gene ID" value="MK1444"/>
</dbReference>
<dbReference type="GeneID" id="1478039"/>
<dbReference type="KEGG" id="mka:MK1444"/>
<dbReference type="PATRIC" id="fig|190192.8.peg.1600"/>
<dbReference type="HOGENOM" id="CLU_190191_0_0_2"/>
<dbReference type="InParanoid" id="Q8TVE8"/>
<dbReference type="OrthoDB" id="55506at2157"/>
<dbReference type="Proteomes" id="UP000001826">
    <property type="component" value="Chromosome"/>
</dbReference>
<dbReference type="GO" id="GO:1990904">
    <property type="term" value="C:ribonucleoprotein complex"/>
    <property type="evidence" value="ECO:0007669"/>
    <property type="project" value="UniProtKB-KW"/>
</dbReference>
<dbReference type="GO" id="GO:0005840">
    <property type="term" value="C:ribosome"/>
    <property type="evidence" value="ECO:0007669"/>
    <property type="project" value="UniProtKB-KW"/>
</dbReference>
<dbReference type="GO" id="GO:0019843">
    <property type="term" value="F:rRNA binding"/>
    <property type="evidence" value="ECO:0007669"/>
    <property type="project" value="UniProtKB-UniRule"/>
</dbReference>
<dbReference type="GO" id="GO:0003735">
    <property type="term" value="F:structural constituent of ribosome"/>
    <property type="evidence" value="ECO:0007669"/>
    <property type="project" value="InterPro"/>
</dbReference>
<dbReference type="GO" id="GO:0008270">
    <property type="term" value="F:zinc ion binding"/>
    <property type="evidence" value="ECO:0007669"/>
    <property type="project" value="UniProtKB-UniRule"/>
</dbReference>
<dbReference type="GO" id="GO:0006412">
    <property type="term" value="P:translation"/>
    <property type="evidence" value="ECO:0007669"/>
    <property type="project" value="UniProtKB-UniRule"/>
</dbReference>
<dbReference type="CDD" id="cd00472">
    <property type="entry name" value="Ribosomal_L24e_L24"/>
    <property type="match status" value="1"/>
</dbReference>
<dbReference type="FunFam" id="2.30.170.20:FF:000001">
    <property type="entry name" value="probable ribosome biogenesis protein RLP24"/>
    <property type="match status" value="1"/>
</dbReference>
<dbReference type="Gene3D" id="2.30.170.20">
    <property type="entry name" value="Ribosomal protein L24e"/>
    <property type="match status" value="1"/>
</dbReference>
<dbReference type="HAMAP" id="MF_00773">
    <property type="entry name" value="Ribosomal_eL24"/>
    <property type="match status" value="1"/>
</dbReference>
<dbReference type="InterPro" id="IPR038630">
    <property type="entry name" value="L24e/L24_sf"/>
</dbReference>
<dbReference type="InterPro" id="IPR056366">
    <property type="entry name" value="Ribosomal_eL24"/>
</dbReference>
<dbReference type="InterPro" id="IPR055345">
    <property type="entry name" value="Ribosomal_eL24-rel_arc"/>
</dbReference>
<dbReference type="InterPro" id="IPR000988">
    <property type="entry name" value="Ribosomal_eL24-rel_N"/>
</dbReference>
<dbReference type="InterPro" id="IPR023442">
    <property type="entry name" value="Ribosomal_eL24_CS"/>
</dbReference>
<dbReference type="InterPro" id="IPR011017">
    <property type="entry name" value="TRASH_dom"/>
</dbReference>
<dbReference type="NCBIfam" id="NF034186">
    <property type="entry name" value="PRK14891.1-1"/>
    <property type="match status" value="1"/>
</dbReference>
<dbReference type="PANTHER" id="PTHR10792">
    <property type="entry name" value="60S RIBOSOMAL PROTEIN L24"/>
    <property type="match status" value="1"/>
</dbReference>
<dbReference type="PANTHER" id="PTHR10792:SF1">
    <property type="entry name" value="RIBOSOMAL PROTEIN L24"/>
    <property type="match status" value="1"/>
</dbReference>
<dbReference type="Pfam" id="PF01246">
    <property type="entry name" value="Ribosomal_L24e"/>
    <property type="match status" value="1"/>
</dbReference>
<dbReference type="SMART" id="SM00746">
    <property type="entry name" value="TRASH"/>
    <property type="match status" value="1"/>
</dbReference>
<dbReference type="SUPFAM" id="SSF57716">
    <property type="entry name" value="Glucocorticoid receptor-like (DNA-binding domain)"/>
    <property type="match status" value="1"/>
</dbReference>
<dbReference type="PROSITE" id="PS01073">
    <property type="entry name" value="RIBOSOMAL_L24E"/>
    <property type="match status" value="1"/>
</dbReference>
<organism>
    <name type="scientific">Methanopyrus kandleri (strain AV19 / DSM 6324 / JCM 9639 / NBRC 100938)</name>
    <dbReference type="NCBI Taxonomy" id="190192"/>
    <lineage>
        <taxon>Archaea</taxon>
        <taxon>Methanobacteriati</taxon>
        <taxon>Methanobacteriota</taxon>
        <taxon>Methanomada group</taxon>
        <taxon>Methanopyri</taxon>
        <taxon>Methanopyrales</taxon>
        <taxon>Methanopyraceae</taxon>
        <taxon>Methanopyrus</taxon>
    </lineage>
</organism>
<proteinExistence type="inferred from homology"/>
<comment type="function">
    <text evidence="1">Binds to the 23S rRNA.</text>
</comment>
<comment type="cofactor">
    <cofactor evidence="1">
        <name>Zn(2+)</name>
        <dbReference type="ChEBI" id="CHEBI:29105"/>
    </cofactor>
    <text evidence="1">Binds 1 zinc ion per subunit.</text>
</comment>
<comment type="subunit">
    <text evidence="1">Part of the 50S ribosomal subunit. Forms a cluster with proteins L3 and L14.</text>
</comment>
<comment type="similarity">
    <text evidence="1">Belongs to the eukaryotic ribosomal protein eL24 family.</text>
</comment>
<name>RL24E_METKA</name>